<organism>
    <name type="scientific">Ostreid herpesvirus 1 (isolate France)</name>
    <name type="common">OsHV-1</name>
    <name type="synonym">Pacific oyster herpesvirus</name>
    <dbReference type="NCBI Taxonomy" id="654903"/>
    <lineage>
        <taxon>Viruses</taxon>
        <taxon>Duplodnaviria</taxon>
        <taxon>Heunggongvirae</taxon>
        <taxon>Peploviricota</taxon>
        <taxon>Herviviricetes</taxon>
        <taxon>Herpesvirales</taxon>
        <taxon>Malacoherpesviridae</taxon>
        <taxon>Ostreavirus</taxon>
        <taxon>Ostreavirus ostreidmalaco1</taxon>
        <taxon>Ostreid herpesvirus 1</taxon>
    </lineage>
</organism>
<name>Y084_OSHVF</name>
<organismHost>
    <name type="scientific">Magallana gigas</name>
    <name type="common">Pacific oyster</name>
    <name type="synonym">Crassostrea gigas</name>
    <dbReference type="NCBI Taxonomy" id="29159"/>
</organismHost>
<organismHost>
    <name type="scientific">Pecten maximus</name>
    <name type="common">King scallop</name>
    <name type="synonym">Pilgrim's clam</name>
    <dbReference type="NCBI Taxonomy" id="6579"/>
</organismHost>
<sequence length="118" mass="13522">MVQGYIHGLDSYNINEASLLIRSDLVKVVEAITGNNDASYIFLLIIITIIFALTMYTSVQVLIRTMRTTISKSVMDDNLKKKYGFERMRNKKRKKRSNATDTAILMNTMLDDDSTDEF</sequence>
<keyword id="KW-1043">Host membrane</keyword>
<keyword id="KW-0472">Membrane</keyword>
<keyword id="KW-1185">Reference proteome</keyword>
<keyword id="KW-0812">Transmembrane</keyword>
<keyword id="KW-1133">Transmembrane helix</keyword>
<dbReference type="EMBL" id="AY509253">
    <property type="protein sequence ID" value="AAS00970.1"/>
    <property type="molecule type" value="Genomic_DNA"/>
</dbReference>
<dbReference type="RefSeq" id="YP_024623.1">
    <property type="nucleotide sequence ID" value="NC_005881.2"/>
</dbReference>
<dbReference type="KEGG" id="vg:2948237"/>
<dbReference type="Proteomes" id="UP000007021">
    <property type="component" value="Segment"/>
</dbReference>
<dbReference type="GO" id="GO:0033644">
    <property type="term" value="C:host cell membrane"/>
    <property type="evidence" value="ECO:0007669"/>
    <property type="project" value="UniProtKB-SubCell"/>
</dbReference>
<dbReference type="GO" id="GO:0016020">
    <property type="term" value="C:membrane"/>
    <property type="evidence" value="ECO:0007669"/>
    <property type="project" value="UniProtKB-KW"/>
</dbReference>
<accession>Q6R7E5</accession>
<proteinExistence type="predicted"/>
<comment type="subcellular location">
    <subcellularLocation>
        <location evidence="2">Host membrane</location>
        <topology evidence="2">Single-pass membrane protein</topology>
    </subcellularLocation>
</comment>
<protein>
    <recommendedName>
        <fullName>Uncharacterized protein ORF84</fullName>
    </recommendedName>
</protein>
<reference key="1">
    <citation type="journal article" date="2005" name="J. Gen. Virol.">
        <title>A novel class of herpesvirus with bivalve hosts.</title>
        <authorList>
            <person name="Davison A.J."/>
            <person name="Trus B.L."/>
            <person name="Cheng N."/>
            <person name="Steven A.C."/>
            <person name="Watson M.S."/>
            <person name="Cunningham C."/>
            <person name="Le Deuff R.M."/>
            <person name="Renault T."/>
        </authorList>
    </citation>
    <scope>NUCLEOTIDE SEQUENCE [LARGE SCALE GENOMIC DNA]</scope>
</reference>
<feature type="chain" id="PRO_0000385105" description="Uncharacterized protein ORF84">
    <location>
        <begin position="1"/>
        <end position="118"/>
    </location>
</feature>
<feature type="transmembrane region" description="Helical" evidence="1">
    <location>
        <begin position="41"/>
        <end position="61"/>
    </location>
</feature>
<evidence type="ECO:0000255" key="1"/>
<evidence type="ECO:0000305" key="2"/>
<gene>
    <name type="ORF">ORF84</name>
</gene>